<reference key="1">
    <citation type="journal article" date="2009" name="Genome Res.">
        <title>Complete genome of the cellulolytic thermophile Acidothermus cellulolyticus 11B provides insights into its ecophysiological and evolutionary adaptations.</title>
        <authorList>
            <person name="Barabote R.D."/>
            <person name="Xie G."/>
            <person name="Leu D.H."/>
            <person name="Normand P."/>
            <person name="Necsulea A."/>
            <person name="Daubin V."/>
            <person name="Medigue C."/>
            <person name="Adney W.S."/>
            <person name="Xu X.C."/>
            <person name="Lapidus A."/>
            <person name="Parales R.E."/>
            <person name="Detter C."/>
            <person name="Pujic P."/>
            <person name="Bruce D."/>
            <person name="Lavire C."/>
            <person name="Challacombe J.F."/>
            <person name="Brettin T.S."/>
            <person name="Berry A.M."/>
        </authorList>
    </citation>
    <scope>NUCLEOTIDE SEQUENCE [LARGE SCALE GENOMIC DNA]</scope>
    <source>
        <strain>ATCC 43068 / DSM 8971 / 11B</strain>
    </source>
</reference>
<protein>
    <recommendedName>
        <fullName evidence="1">Ribosome maturation factor RimP</fullName>
    </recommendedName>
</protein>
<name>RIMP_ACIC1</name>
<feature type="chain" id="PRO_0000384589" description="Ribosome maturation factor RimP">
    <location>
        <begin position="1"/>
        <end position="170"/>
    </location>
</feature>
<evidence type="ECO:0000255" key="1">
    <source>
        <dbReference type="HAMAP-Rule" id="MF_01077"/>
    </source>
</evidence>
<keyword id="KW-0963">Cytoplasm</keyword>
<keyword id="KW-1185">Reference proteome</keyword>
<keyword id="KW-0690">Ribosome biogenesis</keyword>
<gene>
    <name evidence="1" type="primary">rimP</name>
    <name type="ordered locus">Acel_1518</name>
</gene>
<proteinExistence type="inferred from homology"/>
<sequence length="170" mass="18602">MPTSTGAQRLAELLAPVVAGQGLDLEGVTLLDHRTSAHLRIVVDKDGGVQLDEIAAASQAISHFLDNDAEADAIIGPRSYTLEVSSPGIDRPLVEPRHWRRAIGRLVRVQLPDLGPVVARVQDVTGDQVRLGIEWQYTDDGACVRQYEERTVAIAEVRPGQIEVEFEEHP</sequence>
<organism>
    <name type="scientific">Acidothermus cellulolyticus (strain ATCC 43068 / DSM 8971 / 11B)</name>
    <dbReference type="NCBI Taxonomy" id="351607"/>
    <lineage>
        <taxon>Bacteria</taxon>
        <taxon>Bacillati</taxon>
        <taxon>Actinomycetota</taxon>
        <taxon>Actinomycetes</taxon>
        <taxon>Acidothermales</taxon>
        <taxon>Acidothermaceae</taxon>
        <taxon>Acidothermus</taxon>
    </lineage>
</organism>
<comment type="function">
    <text evidence="1">Required for maturation of 30S ribosomal subunits.</text>
</comment>
<comment type="subcellular location">
    <subcellularLocation>
        <location evidence="1">Cytoplasm</location>
    </subcellularLocation>
</comment>
<comment type="similarity">
    <text evidence="1">Belongs to the RimP family.</text>
</comment>
<accession>A0LV30</accession>
<dbReference type="EMBL" id="CP000481">
    <property type="protein sequence ID" value="ABK53290.1"/>
    <property type="molecule type" value="Genomic_DNA"/>
</dbReference>
<dbReference type="RefSeq" id="WP_011720353.1">
    <property type="nucleotide sequence ID" value="NC_008578.1"/>
</dbReference>
<dbReference type="SMR" id="A0LV30"/>
<dbReference type="FunCoup" id="A0LV30">
    <property type="interactions" value="21"/>
</dbReference>
<dbReference type="STRING" id="351607.Acel_1518"/>
<dbReference type="KEGG" id="ace:Acel_1518"/>
<dbReference type="eggNOG" id="COG0779">
    <property type="taxonomic scope" value="Bacteria"/>
</dbReference>
<dbReference type="HOGENOM" id="CLU_070525_3_0_11"/>
<dbReference type="InParanoid" id="A0LV30"/>
<dbReference type="OrthoDB" id="9805006at2"/>
<dbReference type="Proteomes" id="UP000008221">
    <property type="component" value="Chromosome"/>
</dbReference>
<dbReference type="GO" id="GO:0005829">
    <property type="term" value="C:cytosol"/>
    <property type="evidence" value="ECO:0007669"/>
    <property type="project" value="TreeGrafter"/>
</dbReference>
<dbReference type="GO" id="GO:0000028">
    <property type="term" value="P:ribosomal small subunit assembly"/>
    <property type="evidence" value="ECO:0007669"/>
    <property type="project" value="TreeGrafter"/>
</dbReference>
<dbReference type="GO" id="GO:0006412">
    <property type="term" value="P:translation"/>
    <property type="evidence" value="ECO:0007669"/>
    <property type="project" value="TreeGrafter"/>
</dbReference>
<dbReference type="Gene3D" id="3.30.300.70">
    <property type="entry name" value="RimP-like superfamily, N-terminal"/>
    <property type="match status" value="1"/>
</dbReference>
<dbReference type="HAMAP" id="MF_01077">
    <property type="entry name" value="RimP"/>
    <property type="match status" value="1"/>
</dbReference>
<dbReference type="InterPro" id="IPR003728">
    <property type="entry name" value="Ribosome_maturation_RimP"/>
</dbReference>
<dbReference type="InterPro" id="IPR028989">
    <property type="entry name" value="RimP_N"/>
</dbReference>
<dbReference type="InterPro" id="IPR035956">
    <property type="entry name" value="RimP_N_sf"/>
</dbReference>
<dbReference type="NCBIfam" id="NF000930">
    <property type="entry name" value="PRK00092.2-2"/>
    <property type="match status" value="1"/>
</dbReference>
<dbReference type="PANTHER" id="PTHR33867">
    <property type="entry name" value="RIBOSOME MATURATION FACTOR RIMP"/>
    <property type="match status" value="1"/>
</dbReference>
<dbReference type="PANTHER" id="PTHR33867:SF1">
    <property type="entry name" value="RIBOSOME MATURATION FACTOR RIMP"/>
    <property type="match status" value="1"/>
</dbReference>
<dbReference type="Pfam" id="PF02576">
    <property type="entry name" value="RimP_N"/>
    <property type="match status" value="1"/>
</dbReference>
<dbReference type="SUPFAM" id="SSF75420">
    <property type="entry name" value="YhbC-like, N-terminal domain"/>
    <property type="match status" value="1"/>
</dbReference>